<evidence type="ECO:0000250" key="1"/>
<evidence type="ECO:0000255" key="2"/>
<evidence type="ECO:0000256" key="3">
    <source>
        <dbReference type="SAM" id="MobiDB-lite"/>
    </source>
</evidence>
<evidence type="ECO:0000305" key="4"/>
<feature type="chain" id="PRO_0000409159" description="Monopolar spindle protein 2">
    <location>
        <begin position="1"/>
        <end position="387"/>
    </location>
</feature>
<feature type="transmembrane region" description="Helical" evidence="2">
    <location>
        <begin position="311"/>
        <end position="327"/>
    </location>
</feature>
<feature type="region of interest" description="Disordered" evidence="3">
    <location>
        <begin position="216"/>
        <end position="235"/>
    </location>
</feature>
<feature type="coiled-coil region" evidence="2">
    <location>
        <begin position="157"/>
        <end position="269"/>
    </location>
</feature>
<feature type="compositionally biased region" description="Polar residues" evidence="3">
    <location>
        <begin position="220"/>
        <end position="230"/>
    </location>
</feature>
<comment type="function">
    <text evidence="1">Component of the spindle pole body (SPB) required for insertion of the nascent SPB into the nuclear envelope and for the proper execution of spindle pole body (SPB) duplication.</text>
</comment>
<comment type="subunit">
    <text evidence="1">Interacts with BBP1, MPS3, and SPC24.</text>
</comment>
<comment type="subcellular location">
    <subcellularLocation>
        <location evidence="1">Nucleus membrane</location>
        <topology evidence="1">Single-pass membrane protein</topology>
    </subcellularLocation>
    <subcellularLocation>
        <location evidence="1">Cytoplasm</location>
        <location evidence="1">Cytoskeleton</location>
        <location evidence="1">Microtubule organizing center</location>
        <location evidence="1">Spindle pole body</location>
    </subcellularLocation>
</comment>
<comment type="similarity">
    <text evidence="4">Belongs to the MPS2 family.</text>
</comment>
<name>MPS2_YEAS1</name>
<protein>
    <recommendedName>
        <fullName>Monopolar spindle protein 2</fullName>
    </recommendedName>
</protein>
<organism>
    <name type="scientific">Saccharomyces cerevisiae (strain RM11-1a)</name>
    <name type="common">Baker's yeast</name>
    <dbReference type="NCBI Taxonomy" id="285006"/>
    <lineage>
        <taxon>Eukaryota</taxon>
        <taxon>Fungi</taxon>
        <taxon>Dikarya</taxon>
        <taxon>Ascomycota</taxon>
        <taxon>Saccharomycotina</taxon>
        <taxon>Saccharomycetes</taxon>
        <taxon>Saccharomycetales</taxon>
        <taxon>Saccharomycetaceae</taxon>
        <taxon>Saccharomyces</taxon>
    </lineage>
</organism>
<dbReference type="EMBL" id="CH408044">
    <property type="protein sequence ID" value="EDV10299.1"/>
    <property type="molecule type" value="Genomic_DNA"/>
</dbReference>
<dbReference type="SMR" id="B3LHE1"/>
<dbReference type="HOGENOM" id="CLU_069890_0_0_1"/>
<dbReference type="OrthoDB" id="6733at4893"/>
<dbReference type="Proteomes" id="UP000008335">
    <property type="component" value="Unassembled WGS sequence"/>
</dbReference>
<dbReference type="GO" id="GO:0005737">
    <property type="term" value="C:cytoplasm"/>
    <property type="evidence" value="ECO:0007669"/>
    <property type="project" value="UniProtKB-KW"/>
</dbReference>
<dbReference type="GO" id="GO:0031965">
    <property type="term" value="C:nuclear membrane"/>
    <property type="evidence" value="ECO:0007669"/>
    <property type="project" value="UniProtKB-SubCell"/>
</dbReference>
<dbReference type="GO" id="GO:0005816">
    <property type="term" value="C:spindle pole body"/>
    <property type="evidence" value="ECO:0007669"/>
    <property type="project" value="UniProtKB-SubCell"/>
</dbReference>
<dbReference type="GO" id="GO:0071988">
    <property type="term" value="P:protein localization to spindle pole body"/>
    <property type="evidence" value="ECO:0007669"/>
    <property type="project" value="InterPro"/>
</dbReference>
<dbReference type="GO" id="GO:0030474">
    <property type="term" value="P:spindle pole body duplication"/>
    <property type="evidence" value="ECO:0007669"/>
    <property type="project" value="InterPro"/>
</dbReference>
<dbReference type="InterPro" id="IPR031433">
    <property type="entry name" value="Mps2"/>
</dbReference>
<dbReference type="Pfam" id="PF17060">
    <property type="entry name" value="MPS2"/>
    <property type="match status" value="1"/>
</dbReference>
<gene>
    <name type="primary">MPS2</name>
    <name type="synonym">MMC1</name>
    <name type="ORF">SCRG_01074</name>
</gene>
<reference key="1">
    <citation type="submission" date="2005-03" db="EMBL/GenBank/DDBJ databases">
        <title>Annotation of the Saccharomyces cerevisiae RM11-1a genome.</title>
        <authorList>
            <consortium name="The Broad Institute Genome Sequencing Platform"/>
            <person name="Birren B.W."/>
            <person name="Lander E.S."/>
            <person name="Galagan J.E."/>
            <person name="Nusbaum C."/>
            <person name="Devon K."/>
            <person name="Cuomo C."/>
            <person name="Jaffe D.B."/>
            <person name="Butler J."/>
            <person name="Alvarez P."/>
            <person name="Gnerre S."/>
            <person name="Grabherr M."/>
            <person name="Kleber M."/>
            <person name="Mauceli E.W."/>
            <person name="Brockman W."/>
            <person name="MacCallum I.A."/>
            <person name="Rounsley S."/>
            <person name="Young S.K."/>
            <person name="LaButti K."/>
            <person name="Pushparaj V."/>
            <person name="DeCaprio D."/>
            <person name="Crawford M."/>
            <person name="Koehrsen M."/>
            <person name="Engels R."/>
            <person name="Montgomery P."/>
            <person name="Pearson M."/>
            <person name="Howarth C."/>
            <person name="Larson L."/>
            <person name="Luoma S."/>
            <person name="White J."/>
            <person name="O'Leary S."/>
            <person name="Kodira C.D."/>
            <person name="Zeng Q."/>
            <person name="Yandava C."/>
            <person name="Alvarado L."/>
            <person name="Pratt S."/>
            <person name="Kruglyak L."/>
        </authorList>
    </citation>
    <scope>NUCLEOTIDE SEQUENCE [LARGE SCALE GENOMIC DNA]</scope>
    <source>
        <strain>RM11-1a</strain>
    </source>
</reference>
<keyword id="KW-0175">Coiled coil</keyword>
<keyword id="KW-0963">Cytoplasm</keyword>
<keyword id="KW-0206">Cytoskeleton</keyword>
<keyword id="KW-0472">Membrane</keyword>
<keyword id="KW-0539">Nucleus</keyword>
<keyword id="KW-0812">Transmembrane</keyword>
<keyword id="KW-1133">Transmembrane helix</keyword>
<proteinExistence type="inferred from homology"/>
<accession>B3LHE1</accession>
<sequence length="387" mass="44548">MSNGAFDAIFEYAWGQIDKPISGDFIYGKDLPKLIEIIENIFQKAQKSGSYELRLPLFSEINKDLFRTFSNTKTFFKIHKEEFDDIFFNLVNHPLREILENAFIGVDSIPSDFIVSMNLNSPSKFLVENKSKNTEGAGISTSRKKLTESPIKLLSRNNIGKALEVQVEELKRELTAKQSLLQENERQVSELKIRLETYQEKYASIQQRFSDLQKARQVEDNQNSSRTSDPGSPLVTGIDQKAILEEFRRRLQRQTDTISFLKDQIRRERGLNCSNDKVSHSKRKHATTDGDGTFKNFISAVPSNIWVKATIRIIVCFALLAGVLPYIRKYVYAHDTPSQNSRLQLSWWENSGILSKIVWFFEDQTDLETEYRSNANVDDAYSRVFGI</sequence>